<dbReference type="EC" id="3.1.3.-" evidence="5"/>
<dbReference type="EMBL" id="AF399873">
    <property type="protein sequence ID" value="AAK94009.1"/>
    <property type="molecule type" value="mRNA"/>
</dbReference>
<dbReference type="RefSeq" id="NP_598215.1">
    <property type="nucleotide sequence ID" value="NM_133531.2"/>
</dbReference>
<dbReference type="SMR" id="Q923S8"/>
<dbReference type="BioGRID" id="251070">
    <property type="interactions" value="2"/>
</dbReference>
<dbReference type="FunCoup" id="Q923S8">
    <property type="interactions" value="1460"/>
</dbReference>
<dbReference type="IntAct" id="Q923S8">
    <property type="interactions" value="1"/>
</dbReference>
<dbReference type="STRING" id="10116.ENSRNOP00000019028"/>
<dbReference type="iPTMnet" id="Q923S8"/>
<dbReference type="PhosphoSitePlus" id="Q923S8"/>
<dbReference type="PaxDb" id="10116-ENSRNOP00000019028"/>
<dbReference type="GeneID" id="171053"/>
<dbReference type="KEGG" id="rno:171053"/>
<dbReference type="AGR" id="RGD:628857"/>
<dbReference type="CTD" id="55229"/>
<dbReference type="RGD" id="628857">
    <property type="gene designation" value="Pank4"/>
</dbReference>
<dbReference type="eggNOG" id="KOG2201">
    <property type="taxonomic scope" value="Eukaryota"/>
</dbReference>
<dbReference type="eggNOG" id="KOG4584">
    <property type="taxonomic scope" value="Eukaryota"/>
</dbReference>
<dbReference type="InParanoid" id="Q923S8"/>
<dbReference type="OrthoDB" id="28809at9989"/>
<dbReference type="BRENDA" id="2.7.1.33">
    <property type="organism ID" value="5301"/>
</dbReference>
<dbReference type="Reactome" id="R-RNO-199220">
    <property type="pathway name" value="Vitamin B5 (pantothenate) metabolism"/>
</dbReference>
<dbReference type="SABIO-RK" id="Q923S8"/>
<dbReference type="PRO" id="PR:Q923S8"/>
<dbReference type="Proteomes" id="UP000002494">
    <property type="component" value="Unplaced"/>
</dbReference>
<dbReference type="GO" id="GO:0005829">
    <property type="term" value="C:cytosol"/>
    <property type="evidence" value="ECO:0000318"/>
    <property type="project" value="GO_Central"/>
</dbReference>
<dbReference type="GO" id="GO:0005634">
    <property type="term" value="C:nucleus"/>
    <property type="evidence" value="ECO:0000318"/>
    <property type="project" value="GO_Central"/>
</dbReference>
<dbReference type="GO" id="GO:0005524">
    <property type="term" value="F:ATP binding"/>
    <property type="evidence" value="ECO:0007669"/>
    <property type="project" value="UniProtKB-KW"/>
</dbReference>
<dbReference type="GO" id="GO:0046872">
    <property type="term" value="F:metal ion binding"/>
    <property type="evidence" value="ECO:0007669"/>
    <property type="project" value="UniProtKB-KW"/>
</dbReference>
<dbReference type="GO" id="GO:0004594">
    <property type="term" value="F:pantothenate kinase activity"/>
    <property type="evidence" value="ECO:0000318"/>
    <property type="project" value="GO_Central"/>
</dbReference>
<dbReference type="GO" id="GO:0016791">
    <property type="term" value="F:phosphatase activity"/>
    <property type="evidence" value="ECO:0000266"/>
    <property type="project" value="RGD"/>
</dbReference>
<dbReference type="GO" id="GO:0015937">
    <property type="term" value="P:coenzyme A biosynthetic process"/>
    <property type="evidence" value="ECO:0000318"/>
    <property type="project" value="GO_Central"/>
</dbReference>
<dbReference type="CDD" id="cd24123">
    <property type="entry name" value="ASKHA_NBD_PanK-II_Pank4"/>
    <property type="match status" value="1"/>
</dbReference>
<dbReference type="FunFam" id="1.20.1700.10:FF:000001">
    <property type="entry name" value="Pantothenate kinase 4"/>
    <property type="match status" value="1"/>
</dbReference>
<dbReference type="FunFam" id="3.30.420.40:FF:000067">
    <property type="entry name" value="Pantothenate kinase 4"/>
    <property type="match status" value="1"/>
</dbReference>
<dbReference type="FunFam" id="3.30.420.510:FF:000002">
    <property type="entry name" value="Pantothenate kinase 4"/>
    <property type="match status" value="1"/>
</dbReference>
<dbReference type="FunFam" id="3.40.50.10880:FF:000001">
    <property type="entry name" value="Pantothenate kinase 4"/>
    <property type="match status" value="1"/>
</dbReference>
<dbReference type="Gene3D" id="3.30.420.40">
    <property type="match status" value="1"/>
</dbReference>
<dbReference type="Gene3D" id="3.30.420.510">
    <property type="match status" value="1"/>
</dbReference>
<dbReference type="Gene3D" id="1.20.1700.10">
    <property type="entry name" value="AF1104-like"/>
    <property type="match status" value="1"/>
</dbReference>
<dbReference type="Gene3D" id="1.10.285.20">
    <property type="entry name" value="Uncharacterised protein PF01937, DUF89, domain 2"/>
    <property type="match status" value="1"/>
</dbReference>
<dbReference type="Gene3D" id="3.40.50.10880">
    <property type="entry name" value="Uncharacterised protein PF01937, DUF89, domain 3"/>
    <property type="match status" value="1"/>
</dbReference>
<dbReference type="InterPro" id="IPR036075">
    <property type="entry name" value="ARMT-1-like_metal-bd_sf"/>
</dbReference>
<dbReference type="InterPro" id="IPR002791">
    <property type="entry name" value="ARMT1-like_metal-bd"/>
</dbReference>
<dbReference type="InterPro" id="IPR035073">
    <property type="entry name" value="At2g17340_3_helix_bundle"/>
</dbReference>
<dbReference type="InterPro" id="IPR043129">
    <property type="entry name" value="ATPase_NBD"/>
</dbReference>
<dbReference type="InterPro" id="IPR015844">
    <property type="entry name" value="PanK_long"/>
</dbReference>
<dbReference type="InterPro" id="IPR004567">
    <property type="entry name" value="Type_II_PanK"/>
</dbReference>
<dbReference type="NCBIfam" id="TIGR00555">
    <property type="entry name" value="panK_eukar"/>
    <property type="match status" value="1"/>
</dbReference>
<dbReference type="PANTHER" id="PTHR12280:SF20">
    <property type="entry name" value="4'-PHOSPHOPANTETHEINE PHOSPHATASE"/>
    <property type="match status" value="1"/>
</dbReference>
<dbReference type="PANTHER" id="PTHR12280">
    <property type="entry name" value="PANTOTHENATE KINASE"/>
    <property type="match status" value="1"/>
</dbReference>
<dbReference type="Pfam" id="PF01937">
    <property type="entry name" value="ARMT1-like_dom"/>
    <property type="match status" value="1"/>
</dbReference>
<dbReference type="Pfam" id="PF03630">
    <property type="entry name" value="Fumble"/>
    <property type="match status" value="1"/>
</dbReference>
<dbReference type="PIRSF" id="PIRSF036939">
    <property type="entry name" value="PanK_long"/>
    <property type="match status" value="1"/>
</dbReference>
<dbReference type="SUPFAM" id="SSF53067">
    <property type="entry name" value="Actin-like ATPase domain"/>
    <property type="match status" value="2"/>
</dbReference>
<dbReference type="SUPFAM" id="SSF111321">
    <property type="entry name" value="AF1104-like"/>
    <property type="match status" value="1"/>
</dbReference>
<comment type="function">
    <text evidence="5">Phosphatase which shows a preference for 4'-phosphopantetheine and its oxidatively damaged forms (sulfonate or S-sulfonate), providing strong indirect evidence that the phosphatase activity pre-empts damage in the coenzyme A (CoA) pathway. Hydrolyzing excess 4'-phosphopantetheine could constitute a directed overflow mechanism to prevent its oxidation to the S-sulfonate, sulfonate, or other forms. Hydrolyzing 4'-phosphopantetheine sulfonate or S-sulfonate would forestall their conversion to inactive forms of CoA and acyl carrier protein. May play a role in the physiological regulation of CoA intracellular levels.</text>
</comment>
<comment type="catalytic activity">
    <reaction evidence="5">
        <text>(R)-4'-phosphopantetheine + H2O = (R)-pantetheine + phosphate</text>
        <dbReference type="Rhea" id="RHEA:68328"/>
        <dbReference type="ChEBI" id="CHEBI:15377"/>
        <dbReference type="ChEBI" id="CHEBI:16753"/>
        <dbReference type="ChEBI" id="CHEBI:43474"/>
        <dbReference type="ChEBI" id="CHEBI:61723"/>
    </reaction>
    <physiologicalReaction direction="left-to-right" evidence="5">
        <dbReference type="Rhea" id="RHEA:68329"/>
    </physiologicalReaction>
</comment>
<comment type="catalytic activity">
    <reaction evidence="5">
        <text>(R)-4'-phosphopantetheine sulfonate + H2O = (R)-pantetheine sulfonate + phosphate</text>
        <dbReference type="Rhea" id="RHEA:68336"/>
        <dbReference type="ChEBI" id="CHEBI:15377"/>
        <dbReference type="ChEBI" id="CHEBI:43474"/>
        <dbReference type="ChEBI" id="CHEBI:177300"/>
        <dbReference type="ChEBI" id="CHEBI:177301"/>
    </reaction>
    <physiologicalReaction direction="left-to-right" evidence="5">
        <dbReference type="Rhea" id="RHEA:68337"/>
    </physiologicalReaction>
</comment>
<comment type="catalytic activity">
    <reaction evidence="5">
        <text>(R)-4'-phospho-S-sulfopantetheine + H2O = (R)-S-sulfopantetheine + phosphate</text>
        <dbReference type="Rhea" id="RHEA:68340"/>
        <dbReference type="ChEBI" id="CHEBI:15377"/>
        <dbReference type="ChEBI" id="CHEBI:43474"/>
        <dbReference type="ChEBI" id="CHEBI:177302"/>
        <dbReference type="ChEBI" id="CHEBI:177303"/>
    </reaction>
    <physiologicalReaction direction="left-to-right" evidence="5">
        <dbReference type="Rhea" id="RHEA:68341"/>
    </physiologicalReaction>
</comment>
<comment type="cofactor">
    <cofactor evidence="5">
        <name>Mn(2+)</name>
        <dbReference type="ChEBI" id="CHEBI:29035"/>
    </cofactor>
    <cofactor evidence="5">
        <name>Ni(2+)</name>
        <dbReference type="ChEBI" id="CHEBI:49786"/>
    </cofactor>
</comment>
<comment type="activity regulation">
    <text evidence="5">Activity is strongly promoted by Co(2+), Ni(2+), Mg(2+) and Mn(2+). Activity is inhibited by EDTA.</text>
</comment>
<comment type="subunit">
    <text evidence="6">Homodimer. Interacts with PKM.</text>
</comment>
<comment type="subcellular location">
    <subcellularLocation>
        <location evidence="6">Cytoplasm</location>
    </subcellularLocation>
</comment>
<comment type="induction">
    <text evidence="6">By glucose.</text>
</comment>
<comment type="domain">
    <text evidence="4">Subfamily II proteins have an EGMGR motif about 50 residues from the C-terminus (By similarity). This motif lies near the metal-binding residues in the putative substrate-binding cleft 2 (By similarity). Subfamily II proteins occur only in eukaryotes, in two forms: as a stand-alone unit in plants, and as a C-terminal domain of pantothenate kinases in plants, animals, and chytrid fungi (By similarity).</text>
</comment>
<comment type="similarity">
    <text evidence="8">In the N-terminal section; belongs to the type II pantothenate kinase family.</text>
</comment>
<comment type="similarity">
    <text evidence="8">In the C-terminal section; belongs to the damage-control phosphatase family. Phosphopantetheine phosphatase (II) subfamily.</text>
</comment>
<comment type="caution">
    <text evidence="5">Despite belonging to the type II pantothenate kinase family, the pantothenate kinase domain contains a Val residue at position 147 and a Trp residue at position 211 instead of the two conserved active site residues, Glu and Arg. Lacks pantothenate kinase activity.</text>
</comment>
<sequence length="773" mass="86243">MAECRASGGGSGGDSLDKSITLPPDEIFRNLENAKRFAIDIGGSLTKLAYYSTVQHKVAKVRSFDHPGKDAEQDHEPPYEISVQEEITARLHFIKFENTYMEACLDFIRDHLVNTETKVIQATGGGAYKFKDLIEEKLRLKVDKEDVMTCLIKGCNFVLKNIPHEAFMYQKDSDPEFRFQTNHPNIFPYLLVNIGSGVSIVKVETEDRFEWIGGSSIGGGTFWGLGALLTKTKKFDELLQLASRGRHANVDMLVQDIYGGAHQTLGLSGNLIASSFGKSATADREFSKEDMAKSLLHMISNDIGQLACLYAKLHGLDRVYFGGFFIRGHPVTMRTITYSINFFSKGEVQALFLRHEGYLGAIGAFLKGAEQDNPNQYSWGENYAASSGLMSTAPELCPTQRARSGTFDLLEMDRLERPLVNLPLLLDPSSYVPDTVDLTDDALARQYWLTCFEEALDGVVKRAVASQPESVDAAERAEKFRQKYWGKLQTLRHQPFAYGTLTVRSLLDTREHCLNEFNFPDPYSKVKQKENGLALKCFQSVTRSLDSLGWEERQLALVKGLLAGNVFDWGAKAVSDVLESDPQFGFEEAKRKLQERPWLVDSYTKWLQRLKGPPHKCALIFADNSGIDIILGVFPFVRELLCRGIEVILACNSGPALNDVTYSESLIVAERIAAMDPIICTALREDRLLLVQTGSSPPCLDLSRLDKGLAVLVRERGADLVVIEGMGRAVHTNYHALLRCESLKLAVVKNAWLAERLGGQLFSVIFKYEVPAE</sequence>
<evidence type="ECO:0000250" key="1"/>
<evidence type="ECO:0000250" key="2">
    <source>
        <dbReference type="UniProtKB" id="Q04371"/>
    </source>
</evidence>
<evidence type="ECO:0000250" key="3">
    <source>
        <dbReference type="UniProtKB" id="Q80YV4"/>
    </source>
</evidence>
<evidence type="ECO:0000250" key="4">
    <source>
        <dbReference type="UniProtKB" id="Q8K4K6"/>
    </source>
</evidence>
<evidence type="ECO:0000250" key="5">
    <source>
        <dbReference type="UniProtKB" id="Q9NVE7"/>
    </source>
</evidence>
<evidence type="ECO:0000269" key="6">
    <source>
    </source>
</evidence>
<evidence type="ECO:0000303" key="7">
    <source>
    </source>
</evidence>
<evidence type="ECO:0000305" key="8"/>
<evidence type="ECO:0000312" key="9">
    <source>
        <dbReference type="RGD" id="628857"/>
    </source>
</evidence>
<evidence type="ECO:0007744" key="10">
    <source>
    </source>
</evidence>
<proteinExistence type="evidence at protein level"/>
<name>PANK4_RAT</name>
<feature type="initiator methionine" description="Removed" evidence="5">
    <location>
        <position position="1"/>
    </location>
</feature>
<feature type="chain" id="PRO_0000161807" description="4'-phosphopantetheine phosphatase">
    <location>
        <begin position="2"/>
        <end position="773"/>
    </location>
</feature>
<feature type="region of interest" description="Pantothenate kinase" evidence="5">
    <location>
        <begin position="2"/>
        <end position="402"/>
    </location>
</feature>
<feature type="region of interest" description="4'-phosphopantetheine phosphatase" evidence="5">
    <location>
        <begin position="403"/>
        <end position="773"/>
    </location>
</feature>
<feature type="short sequence motif" description="Subfamily II EGMGR motif" evidence="5">
    <location>
        <begin position="724"/>
        <end position="728"/>
    </location>
</feature>
<feature type="binding site" evidence="1">
    <location>
        <position position="196"/>
    </location>
    <ligand>
        <name>acetyl-CoA</name>
        <dbReference type="ChEBI" id="CHEBI:57288"/>
    </ligand>
</feature>
<feature type="binding site" evidence="1">
    <location>
        <position position="199"/>
    </location>
    <ligand>
        <name>acetyl-CoA</name>
        <dbReference type="ChEBI" id="CHEBI:57288"/>
    </ligand>
</feature>
<feature type="binding site" evidence="2">
    <location>
        <position position="623"/>
    </location>
    <ligand>
        <name>Mn(2+)</name>
        <dbReference type="ChEBI" id="CHEBI:29035"/>
        <note>catalytic; for phosphatase activity</note>
    </ligand>
</feature>
<feature type="binding site" evidence="2">
    <location>
        <position position="624"/>
    </location>
    <ligand>
        <name>Mn(2+)</name>
        <dbReference type="ChEBI" id="CHEBI:29035"/>
        <note>catalytic; for phosphatase activity</note>
    </ligand>
</feature>
<feature type="binding site" evidence="2">
    <location>
        <position position="659"/>
    </location>
    <ligand>
        <name>Mn(2+)</name>
        <dbReference type="ChEBI" id="CHEBI:29035"/>
        <note>catalytic; for phosphatase activity</note>
    </ligand>
</feature>
<feature type="modified residue" description="N-acetylalanine" evidence="5">
    <location>
        <position position="2"/>
    </location>
</feature>
<feature type="modified residue" description="3'-nitrotyrosine" evidence="3">
    <location>
        <position position="320"/>
    </location>
</feature>
<feature type="modified residue" description="Phosphoserine" evidence="5">
    <location>
        <position position="404"/>
    </location>
</feature>
<feature type="modified residue" description="Phosphothreonine" evidence="10">
    <location>
        <position position="406"/>
    </location>
</feature>
<accession>Q923S8</accession>
<reference key="1">
    <citation type="journal article" date="2005" name="Mol. Cell. Biochem.">
        <title>High glucose upregulates pantothenate kinase 4 (PanK4) and thus affects M2-type pyruvate kinase (Pkm2).</title>
        <authorList>
            <person name="Li Y."/>
            <person name="Chang Y."/>
            <person name="Zhang L."/>
            <person name="Feng Q."/>
            <person name="Liu Z."/>
            <person name="Zhang Y."/>
            <person name="Zuo J."/>
            <person name="Meng Y."/>
            <person name="Fang F."/>
        </authorList>
    </citation>
    <scope>NUCLEOTIDE SEQUENCE [MRNA]</scope>
    <scope>INDUCTION</scope>
    <scope>SUBCELLULAR LOCATION</scope>
    <scope>INTERACTION WITH PKM</scope>
    <source>
        <strain>Sprague-Dawley</strain>
        <tissue>Skeletal muscle</tissue>
    </source>
</reference>
<reference key="2">
    <citation type="journal article" date="2012" name="Nat. Commun.">
        <title>Quantitative maps of protein phosphorylation sites across 14 different rat organs and tissues.</title>
        <authorList>
            <person name="Lundby A."/>
            <person name="Secher A."/>
            <person name="Lage K."/>
            <person name="Nordsborg N.B."/>
            <person name="Dmytriyev A."/>
            <person name="Lundby C."/>
            <person name="Olsen J.V."/>
        </authorList>
    </citation>
    <scope>PHOSPHORYLATION [LARGE SCALE ANALYSIS] AT THR-406</scope>
    <scope>IDENTIFICATION BY MASS SPECTROMETRY [LARGE SCALE ANALYSIS]</scope>
</reference>
<gene>
    <name evidence="9" type="primary">Pank4</name>
    <name type="synonym">Fang1</name>
</gene>
<protein>
    <recommendedName>
        <fullName evidence="5">4'-phosphopantetheine phosphatase</fullName>
        <ecNumber evidence="5">3.1.3.-</ecNumber>
    </recommendedName>
    <alternativeName>
        <fullName evidence="5">Inactive pantothenic acid kinase 4</fullName>
        <shortName evidence="7">rPanK4</shortName>
    </alternativeName>
</protein>
<organism>
    <name type="scientific">Rattus norvegicus</name>
    <name type="common">Rat</name>
    <dbReference type="NCBI Taxonomy" id="10116"/>
    <lineage>
        <taxon>Eukaryota</taxon>
        <taxon>Metazoa</taxon>
        <taxon>Chordata</taxon>
        <taxon>Craniata</taxon>
        <taxon>Vertebrata</taxon>
        <taxon>Euteleostomi</taxon>
        <taxon>Mammalia</taxon>
        <taxon>Eutheria</taxon>
        <taxon>Euarchontoglires</taxon>
        <taxon>Glires</taxon>
        <taxon>Rodentia</taxon>
        <taxon>Myomorpha</taxon>
        <taxon>Muroidea</taxon>
        <taxon>Muridae</taxon>
        <taxon>Murinae</taxon>
        <taxon>Rattus</taxon>
    </lineage>
</organism>
<keyword id="KW-0007">Acetylation</keyword>
<keyword id="KW-0067">ATP-binding</keyword>
<keyword id="KW-0173">Coenzyme A biosynthesis</keyword>
<keyword id="KW-0963">Cytoplasm</keyword>
<keyword id="KW-0378">Hydrolase</keyword>
<keyword id="KW-0464">Manganese</keyword>
<keyword id="KW-0479">Metal-binding</keyword>
<keyword id="KW-0533">Nickel</keyword>
<keyword id="KW-0944">Nitration</keyword>
<keyword id="KW-0547">Nucleotide-binding</keyword>
<keyword id="KW-0597">Phosphoprotein</keyword>
<keyword id="KW-1185">Reference proteome</keyword>